<gene>
    <name evidence="7" type="primary">EXO84B</name>
    <name evidence="9" type="ordered locus">At5g49830</name>
    <name evidence="10" type="ORF">K21G20.4</name>
</gene>
<evidence type="ECO:0000256" key="1">
    <source>
        <dbReference type="SAM" id="MobiDB-lite"/>
    </source>
</evidence>
<evidence type="ECO:0000269" key="2">
    <source>
    </source>
</evidence>
<evidence type="ECO:0000269" key="3">
    <source>
    </source>
</evidence>
<evidence type="ECO:0000269" key="4">
    <source>
    </source>
</evidence>
<evidence type="ECO:0000269" key="5">
    <source>
    </source>
</evidence>
<evidence type="ECO:0000269" key="6">
    <source>
    </source>
</evidence>
<evidence type="ECO:0000303" key="7">
    <source>
    </source>
</evidence>
<evidence type="ECO:0000305" key="8"/>
<evidence type="ECO:0000312" key="9">
    <source>
        <dbReference type="Araport" id="AT5G49830"/>
    </source>
</evidence>
<evidence type="ECO:0000312" key="10">
    <source>
        <dbReference type="EMBL" id="BAA98150.1"/>
    </source>
</evidence>
<sequence length="752" mass="82748">MAAKTARSKATPTKENGVRVEEGLSLFKSDKFDADAYVQSKCSINEKDIKQLCSYLLDLKRASAEEMRRSVYANYPAFIRTSKEISDLEGELSSIRNLLSTQATLIHGLADGVNIDDDKVSDESLANGLLNFEDNGLSDLEKWATEFPDHLDALLAERRVDEALAAFDEGEILVSQANEKHTLSSSVLSSLQFAIAERKQKLADQLAKAACQPSTRGGELRSAIAALKRLGDGPRAHTVLLDAHFQRYQYNMQSLRPSSTSYGGAYTAALSQLVFSAISQASSDSLGIFGKEPAYSSELVTWATKQTEAFSLLVKRHALASSAAAGGLRAAAECAQIALGHCSLLEARGLSLCPVLLKHFKPIVEQALEANLKRIEENTAAMAAADDWVLTSPPAGSRHASTAFQNKLTSSAHRFNLMVQDFFEDVGPLLSMQLGSKALEGLFRVFNSYVDVLVRALPGSIEEEDPNFESSCNKIVQMAETEANQLALLANASLLADELLPRAAMKLSLDQTGQRTDDLRRPLDRQNRNPEQREWKRRLLSTVDKLKDAFCRQHALDLIFTEEGDSHLSADMYVNIDENGEDVDFFPSLIFQELFAKLNRMASLAADMFVGRERFAISLLMRLTETVILWLSGDQSFWDDIEEGPRPLGPLGLRQLYLDMKFVICFASQGRYLSRNLHRGTNEIISKALAAFTATGIDPYSELPEDDWFNDICVDAMERLSGKTKGNNGDVHSPTASVSAQSVSSARSHGSY</sequence>
<name>EX84B_ARATH</name>
<dbReference type="EMBL" id="AB025612">
    <property type="protein sequence ID" value="BAA98150.1"/>
    <property type="molecule type" value="Genomic_DNA"/>
</dbReference>
<dbReference type="EMBL" id="CP002688">
    <property type="protein sequence ID" value="AED95860.1"/>
    <property type="molecule type" value="Genomic_DNA"/>
</dbReference>
<dbReference type="EMBL" id="AY075643">
    <property type="protein sequence ID" value="AAL77652.1"/>
    <property type="molecule type" value="mRNA"/>
</dbReference>
<dbReference type="EMBL" id="AY093996">
    <property type="protein sequence ID" value="AAM16257.1"/>
    <property type="molecule type" value="mRNA"/>
</dbReference>
<dbReference type="RefSeq" id="NP_199794.1">
    <property type="nucleotide sequence ID" value="NM_124361.5"/>
</dbReference>
<dbReference type="SMR" id="Q9LTB0"/>
<dbReference type="BioGRID" id="20292">
    <property type="interactions" value="4"/>
</dbReference>
<dbReference type="FunCoup" id="Q9LTB0">
    <property type="interactions" value="2072"/>
</dbReference>
<dbReference type="STRING" id="3702.Q9LTB0"/>
<dbReference type="iPTMnet" id="Q9LTB0"/>
<dbReference type="PaxDb" id="3702-AT5G49830.2"/>
<dbReference type="ProMEX" id="Q9LTB0"/>
<dbReference type="ProteomicsDB" id="221812"/>
<dbReference type="EnsemblPlants" id="AT5G49830.1">
    <property type="protein sequence ID" value="AT5G49830.1"/>
    <property type="gene ID" value="AT5G49830"/>
</dbReference>
<dbReference type="GeneID" id="835046"/>
<dbReference type="Gramene" id="AT5G49830.1">
    <property type="protein sequence ID" value="AT5G49830.1"/>
    <property type="gene ID" value="AT5G49830"/>
</dbReference>
<dbReference type="KEGG" id="ath:AT5G49830"/>
<dbReference type="Araport" id="AT5G49830"/>
<dbReference type="TAIR" id="AT5G49830">
    <property type="gene designation" value="EXO84B"/>
</dbReference>
<dbReference type="eggNOG" id="KOG2215">
    <property type="taxonomic scope" value="Eukaryota"/>
</dbReference>
<dbReference type="HOGENOM" id="CLU_015217_2_0_1"/>
<dbReference type="InParanoid" id="Q9LTB0"/>
<dbReference type="OMA" id="KQNRMPE"/>
<dbReference type="PhylomeDB" id="Q9LTB0"/>
<dbReference type="PRO" id="PR:Q9LTB0"/>
<dbReference type="Proteomes" id="UP000006548">
    <property type="component" value="Chromosome 5"/>
</dbReference>
<dbReference type="ExpressionAtlas" id="Q9LTB0">
    <property type="expression patterns" value="baseline and differential"/>
</dbReference>
<dbReference type="GO" id="GO:0005856">
    <property type="term" value="C:cytoskeleton"/>
    <property type="evidence" value="ECO:0007669"/>
    <property type="project" value="UniProtKB-KW"/>
</dbReference>
<dbReference type="GO" id="GO:0005829">
    <property type="term" value="C:cytosol"/>
    <property type="evidence" value="ECO:0007669"/>
    <property type="project" value="UniProtKB-SubCell"/>
</dbReference>
<dbReference type="GO" id="GO:0000145">
    <property type="term" value="C:exocyst"/>
    <property type="evidence" value="ECO:0007669"/>
    <property type="project" value="InterPro"/>
</dbReference>
<dbReference type="GO" id="GO:0005576">
    <property type="term" value="C:extracellular region"/>
    <property type="evidence" value="ECO:0007669"/>
    <property type="project" value="UniProtKB-KW"/>
</dbReference>
<dbReference type="GO" id="GO:0048471">
    <property type="term" value="C:perinuclear region of cytoplasm"/>
    <property type="evidence" value="ECO:0007669"/>
    <property type="project" value="UniProtKB-SubCell"/>
</dbReference>
<dbReference type="GO" id="GO:0009524">
    <property type="term" value="C:phragmoplast"/>
    <property type="evidence" value="ECO:0007669"/>
    <property type="project" value="UniProtKB-SubCell"/>
</dbReference>
<dbReference type="GO" id="GO:0005886">
    <property type="term" value="C:plasma membrane"/>
    <property type="evidence" value="ECO:0000314"/>
    <property type="project" value="UniProtKB"/>
</dbReference>
<dbReference type="GO" id="GO:0006887">
    <property type="term" value="P:exocytosis"/>
    <property type="evidence" value="ECO:0007669"/>
    <property type="project" value="UniProtKB-KW"/>
</dbReference>
<dbReference type="GO" id="GO:0006893">
    <property type="term" value="P:Golgi to plasma membrane transport"/>
    <property type="evidence" value="ECO:0000315"/>
    <property type="project" value="UniProtKB"/>
</dbReference>
<dbReference type="GO" id="GO:0008104">
    <property type="term" value="P:protein localization"/>
    <property type="evidence" value="ECO:0000315"/>
    <property type="project" value="UniProtKB"/>
</dbReference>
<dbReference type="GO" id="GO:0015031">
    <property type="term" value="P:protein transport"/>
    <property type="evidence" value="ECO:0007669"/>
    <property type="project" value="UniProtKB-KW"/>
</dbReference>
<dbReference type="FunFam" id="1.20.58.1210:FF:000002">
    <property type="entry name" value="Exocyst complex component EXO84B"/>
    <property type="match status" value="1"/>
</dbReference>
<dbReference type="FunFam" id="1.20.58.1220:FF:000001">
    <property type="entry name" value="Exocyst complex component EXO84B"/>
    <property type="match status" value="1"/>
</dbReference>
<dbReference type="Gene3D" id="1.20.58.1220">
    <property type="entry name" value="Exo84p, C-terminal helical domain"/>
    <property type="match status" value="1"/>
</dbReference>
<dbReference type="Gene3D" id="1.20.58.1210">
    <property type="entry name" value="Exo84p, N-terminal helical domain"/>
    <property type="match status" value="1"/>
</dbReference>
<dbReference type="InterPro" id="IPR016159">
    <property type="entry name" value="Cullin_repeat-like_dom_sf"/>
</dbReference>
<dbReference type="InterPro" id="IPR033961">
    <property type="entry name" value="Exo84"/>
</dbReference>
<dbReference type="InterPro" id="IPR032403">
    <property type="entry name" value="Exo84_C"/>
</dbReference>
<dbReference type="InterPro" id="IPR042561">
    <property type="entry name" value="Exo84_C_1"/>
</dbReference>
<dbReference type="InterPro" id="IPR042560">
    <property type="entry name" value="Exo84_C_2"/>
</dbReference>
<dbReference type="PANTHER" id="PTHR21426">
    <property type="entry name" value="EXOCYST COMPLEX COMPONENT 8"/>
    <property type="match status" value="1"/>
</dbReference>
<dbReference type="PANTHER" id="PTHR21426:SF12">
    <property type="entry name" value="EXOCYST COMPLEX COMPONENT 8"/>
    <property type="match status" value="1"/>
</dbReference>
<dbReference type="Pfam" id="PF16528">
    <property type="entry name" value="Exo84_C"/>
    <property type="match status" value="1"/>
</dbReference>
<dbReference type="Pfam" id="PF08700">
    <property type="entry name" value="VPS51_Exo84_N"/>
    <property type="match status" value="1"/>
</dbReference>
<dbReference type="SUPFAM" id="SSF74788">
    <property type="entry name" value="Cullin repeat-like"/>
    <property type="match status" value="1"/>
</dbReference>
<comment type="function">
    <text evidence="3 4 5">Component of the exocyst complex involved in the docking of exocytic vesicles with fusion sites on the plasma membrane during regulated or polarized secretion. Involved in polarized cell growth and organ morphogenesis. During cytokinesis, involved in cell plate initiation, cell plate maturation and formation of new primary cell wall. Probable component of an exocyst subcomplex specifically involved in autophagy-related, Golgi-independent membrane traffic to the vacuole. Regulates autophagosome formation and autophagy-related Golgi-independent import into the vacuole. Mediates ABCG36/PEN3 outer-membrane polarity at the periphery of lateral root cap and root epidermal cells (PubMed:27803190).</text>
</comment>
<comment type="subunit">
    <text evidence="3 4 6">The exocyst complex is composed of SEC3, SEC5, SEC6, SEC8, SEC10, EXO70A1 and EXO84B. Interacts with SEC6, SEC10, SEC15B and EXO70A1. Interacts with EXO70B1. Binds directly to B1L (PubMed:35249253).</text>
</comment>
<comment type="subcellular location">
    <subcellularLocation>
        <location evidence="2">Cytoplasm</location>
        <location evidence="2">Cytosol</location>
    </subcellularLocation>
    <subcellularLocation>
        <location evidence="2">Cytoplasm</location>
        <location evidence="2">Perinuclear region</location>
    </subcellularLocation>
    <subcellularLocation>
        <location evidence="3">Cytoplasm</location>
        <location evidence="3">Cytoskeleton</location>
        <location evidence="3">Phragmoplast</location>
    </subcellularLocation>
    <subcellularLocation>
        <location evidence="3">Secreted</location>
        <location evidence="3">Cell wall</location>
    </subcellularLocation>
    <subcellularLocation>
        <location evidence="5">Cell membrane</location>
    </subcellularLocation>
    <text evidence="2 3 5">Localized to globular structures in the perinuclear region (PubMed:19895414). During cytokinesis, localizes to the nascent cell plate and later to the cell plate insertion site and along the post-cytokinetic wall (PubMed:20870962). Polarized localization at the outermost side of root epidermal and cap cells, in the outer lateral membrane domain facing the environment (PubMed:27803190).</text>
</comment>
<comment type="disruption phenotype">
    <text evidence="3 5">Sterile plants with extreme dwarf phenotype and cytokinetic defects, and accumulation of vesicles in leaf epidermal cells (PubMed:20870962). Impaired trafficking and endocytic recycling of ABCG36/PEN3 between the trans-Golgi network and the plasma membrane in root epidermal and cap cells leading to a strong intracellular accumulation of ABCG36/PEN3 and lost ABCG36/PEN3 outer lateral plasma membrane polarity (PubMed:27803190).</text>
</comment>
<comment type="similarity">
    <text evidence="8">Belongs to the EXO84 family.</text>
</comment>
<reference key="1">
    <citation type="submission" date="2011-04" db="EMBL/GenBank/DDBJ databases">
        <title>Structural analysis of Arabidopsis thaliana chromosome 5. XI.</title>
        <authorList>
            <person name="Kaneko T."/>
            <person name="Katoh T."/>
            <person name="Asamizu E."/>
            <person name="Sato S."/>
            <person name="Nakamura Y."/>
            <person name="Kotani H."/>
            <person name="Tabata S."/>
        </authorList>
    </citation>
    <scope>NUCLEOTIDE SEQUENCE [LARGE SCALE GENOMIC DNA]</scope>
    <source>
        <strain>cv. Columbia</strain>
    </source>
</reference>
<reference key="2">
    <citation type="journal article" date="2017" name="Plant J.">
        <title>Araport11: a complete reannotation of the Arabidopsis thaliana reference genome.</title>
        <authorList>
            <person name="Cheng C.Y."/>
            <person name="Krishnakumar V."/>
            <person name="Chan A.P."/>
            <person name="Thibaud-Nissen F."/>
            <person name="Schobel S."/>
            <person name="Town C.D."/>
        </authorList>
    </citation>
    <scope>GENOME REANNOTATION</scope>
    <source>
        <strain>cv. Columbia</strain>
    </source>
</reference>
<reference key="3">
    <citation type="journal article" date="2003" name="Science">
        <title>Empirical analysis of transcriptional activity in the Arabidopsis genome.</title>
        <authorList>
            <person name="Yamada K."/>
            <person name="Lim J."/>
            <person name="Dale J.M."/>
            <person name="Chen H."/>
            <person name="Shinn P."/>
            <person name="Palm C.J."/>
            <person name="Southwick A.M."/>
            <person name="Wu H.C."/>
            <person name="Kim C.J."/>
            <person name="Nguyen M."/>
            <person name="Pham P.K."/>
            <person name="Cheuk R.F."/>
            <person name="Karlin-Newmann G."/>
            <person name="Liu S.X."/>
            <person name="Lam B."/>
            <person name="Sakano H."/>
            <person name="Wu T."/>
            <person name="Yu G."/>
            <person name="Miranda M."/>
            <person name="Quach H.L."/>
            <person name="Tripp M."/>
            <person name="Chang C.H."/>
            <person name="Lee J.M."/>
            <person name="Toriumi M.J."/>
            <person name="Chan M.M."/>
            <person name="Tang C.C."/>
            <person name="Onodera C.S."/>
            <person name="Deng J.M."/>
            <person name="Akiyama K."/>
            <person name="Ansari Y."/>
            <person name="Arakawa T."/>
            <person name="Banh J."/>
            <person name="Banno F."/>
            <person name="Bowser L."/>
            <person name="Brooks S.Y."/>
            <person name="Carninci P."/>
            <person name="Chao Q."/>
            <person name="Choy N."/>
            <person name="Enju A."/>
            <person name="Goldsmith A.D."/>
            <person name="Gurjal M."/>
            <person name="Hansen N.F."/>
            <person name="Hayashizaki Y."/>
            <person name="Johnson-Hopson C."/>
            <person name="Hsuan V.W."/>
            <person name="Iida K."/>
            <person name="Karnes M."/>
            <person name="Khan S."/>
            <person name="Koesema E."/>
            <person name="Ishida J."/>
            <person name="Jiang P.X."/>
            <person name="Jones T."/>
            <person name="Kawai J."/>
            <person name="Kamiya A."/>
            <person name="Meyers C."/>
            <person name="Nakajima M."/>
            <person name="Narusaka M."/>
            <person name="Seki M."/>
            <person name="Sakurai T."/>
            <person name="Satou M."/>
            <person name="Tamse R."/>
            <person name="Vaysberg M."/>
            <person name="Wallender E.K."/>
            <person name="Wong C."/>
            <person name="Yamamura Y."/>
            <person name="Yuan S."/>
            <person name="Shinozaki K."/>
            <person name="Davis R.W."/>
            <person name="Theologis A."/>
            <person name="Ecker J.R."/>
        </authorList>
    </citation>
    <scope>NUCLEOTIDE SEQUENCE [LARGE SCALE MRNA]</scope>
    <source>
        <strain>cv. Columbia</strain>
    </source>
</reference>
<reference key="4">
    <citation type="journal article" date="2010" name="New Phytol.">
        <title>Characterization of the Arabidopsis thaliana exocyst complex gene families by phylogenetic, expression profiling, and subcellular localization studies.</title>
        <authorList>
            <person name="Chong Y.T."/>
            <person name="Gidda S.K."/>
            <person name="Sanford C."/>
            <person name="Parkinson J."/>
            <person name="Mullen R.T."/>
            <person name="Goring D.R."/>
        </authorList>
    </citation>
    <scope>GENE FAMILY</scope>
    <scope>NOMENCLATURE</scope>
    <scope>SUBCELLULAR LOCATION</scope>
</reference>
<reference key="5">
    <citation type="journal article" date="2010" name="Plant Cell">
        <title>The Arabidopsis exocyst complex is involved in cytokinesis and cell plate maturation.</title>
        <authorList>
            <person name="Fendrych M."/>
            <person name="Synek L."/>
            <person name="Pecenkova T."/>
            <person name="Toupalova H."/>
            <person name="Cole R."/>
            <person name="Drdova E."/>
            <person name="Nebesarova J."/>
            <person name="Sedinova M."/>
            <person name="Hala M."/>
            <person name="Fowler J.E."/>
            <person name="Zarsky V."/>
        </authorList>
    </citation>
    <scope>FUNCTION</scope>
    <scope>COMPONENT OF THE EXOCYST COMPLEX</scope>
    <scope>INTERACTION WITH SEC6; SEC10; SEC15B AND EXO70A1</scope>
    <scope>SUBCELLULAR LOCATION</scope>
    <scope>DISRUPTION PHENOTYPE</scope>
</reference>
<reference key="6">
    <citation type="journal article" date="2013" name="Traffic">
        <title>Arabidopsis exocyst subcomplex containing subunit EXO70B1 is involved in the autophagy-related transport to the vacuole.</title>
        <authorList>
            <person name="Kulich I."/>
            <person name="Pecenkova T."/>
            <person name="Sekeres J."/>
            <person name="Smetana O."/>
            <person name="Fendrych M."/>
            <person name="Foissner I."/>
            <person name="Hoeftberger M."/>
            <person name="Zarsky V."/>
        </authorList>
    </citation>
    <scope>FUNCTION</scope>
    <scope>INTERACTION WITH EXO70B1</scope>
</reference>
<reference key="7">
    <citation type="journal article" date="2016" name="Plant Physiol.">
        <title>A framework for lateral membrane trafficking and polar tethering of the PEN3 ATP-binding cassette transporter.</title>
        <authorList>
            <person name="Mao H."/>
            <person name="Nakamura M."/>
            <person name="Viotti C."/>
            <person name="Grebe M."/>
        </authorList>
    </citation>
    <scope>FUNCTION</scope>
    <scope>DISRUPTION PHENOTYPE</scope>
    <scope>SUBCELLULAR LOCATION</scope>
    <source>
        <strain>cv. Columbia</strain>
    </source>
</reference>
<reference key="8">
    <citation type="journal article" date="2022" name="J. Integr. Plant Biol.">
        <title>BYPASS1-LIKE regulates lateral root initiation via exocytic vesicular trafficking-mediated PIN recycling in Arabidopsis.</title>
        <authorList>
            <person name="Yang G."/>
            <person name="Chen B.-X."/>
            <person name="Chen T."/>
            <person name="Chen J.-H."/>
            <person name="Lin X.-Y."/>
            <person name="Yue X.-L."/>
            <person name="An L.-Z."/>
            <person name="Zhang H."/>
        </authorList>
    </citation>
    <scope>INTERACTION WITH B1L</scope>
    <source>
        <strain>cv. Columbia</strain>
    </source>
</reference>
<organism>
    <name type="scientific">Arabidopsis thaliana</name>
    <name type="common">Mouse-ear cress</name>
    <dbReference type="NCBI Taxonomy" id="3702"/>
    <lineage>
        <taxon>Eukaryota</taxon>
        <taxon>Viridiplantae</taxon>
        <taxon>Streptophyta</taxon>
        <taxon>Embryophyta</taxon>
        <taxon>Tracheophyta</taxon>
        <taxon>Spermatophyta</taxon>
        <taxon>Magnoliopsida</taxon>
        <taxon>eudicotyledons</taxon>
        <taxon>Gunneridae</taxon>
        <taxon>Pentapetalae</taxon>
        <taxon>rosids</taxon>
        <taxon>malvids</taxon>
        <taxon>Brassicales</taxon>
        <taxon>Brassicaceae</taxon>
        <taxon>Camelineae</taxon>
        <taxon>Arabidopsis</taxon>
    </lineage>
</organism>
<accession>Q9LTB0</accession>
<keyword id="KW-1003">Cell membrane</keyword>
<keyword id="KW-0134">Cell wall</keyword>
<keyword id="KW-0963">Cytoplasm</keyword>
<keyword id="KW-0206">Cytoskeleton</keyword>
<keyword id="KW-0268">Exocytosis</keyword>
<keyword id="KW-0472">Membrane</keyword>
<keyword id="KW-0653">Protein transport</keyword>
<keyword id="KW-1185">Reference proteome</keyword>
<keyword id="KW-0964">Secreted</keyword>
<keyword id="KW-0813">Transport</keyword>
<protein>
    <recommendedName>
        <fullName evidence="7">Exocyst complex component EXO84B</fullName>
        <shortName evidence="7">AtExo80b</shortName>
    </recommendedName>
</protein>
<proteinExistence type="evidence at protein level"/>
<feature type="chain" id="PRO_0000424568" description="Exocyst complex component EXO84B">
    <location>
        <begin position="1"/>
        <end position="752"/>
    </location>
</feature>
<feature type="region of interest" description="Disordered" evidence="1">
    <location>
        <begin position="511"/>
        <end position="532"/>
    </location>
</feature>
<feature type="region of interest" description="Disordered" evidence="1">
    <location>
        <begin position="724"/>
        <end position="752"/>
    </location>
</feature>
<feature type="compositionally biased region" description="Basic and acidic residues" evidence="1">
    <location>
        <begin position="515"/>
        <end position="532"/>
    </location>
</feature>
<feature type="compositionally biased region" description="Low complexity" evidence="1">
    <location>
        <begin position="733"/>
        <end position="752"/>
    </location>
</feature>